<dbReference type="EMBL" id="X51767">
    <property type="protein sequence ID" value="CAA36069.1"/>
    <property type="molecule type" value="mRNA"/>
</dbReference>
<dbReference type="PIR" id="S11881">
    <property type="entry name" value="S11881"/>
</dbReference>
<dbReference type="SMR" id="P16146"/>
<dbReference type="GO" id="GO:0005634">
    <property type="term" value="C:nucleus"/>
    <property type="evidence" value="ECO:0007669"/>
    <property type="project" value="UniProtKB-SubCell"/>
</dbReference>
<dbReference type="GO" id="GO:0003677">
    <property type="term" value="F:DNA binding"/>
    <property type="evidence" value="ECO:0007669"/>
    <property type="project" value="UniProtKB-KW"/>
</dbReference>
<dbReference type="GO" id="GO:0003700">
    <property type="term" value="F:DNA-binding transcription factor activity"/>
    <property type="evidence" value="ECO:0007669"/>
    <property type="project" value="InterPro"/>
</dbReference>
<dbReference type="CDD" id="cd00018">
    <property type="entry name" value="AP2"/>
    <property type="match status" value="1"/>
</dbReference>
<dbReference type="FunFam" id="3.30.730.10:FF:000001">
    <property type="entry name" value="Ethylene-responsive transcription factor 2"/>
    <property type="match status" value="1"/>
</dbReference>
<dbReference type="Gene3D" id="3.30.730.10">
    <property type="entry name" value="AP2/ERF domain"/>
    <property type="match status" value="1"/>
</dbReference>
<dbReference type="InterPro" id="IPR001471">
    <property type="entry name" value="AP2/ERF_dom"/>
</dbReference>
<dbReference type="InterPro" id="IPR036955">
    <property type="entry name" value="AP2/ERF_dom_sf"/>
</dbReference>
<dbReference type="InterPro" id="IPR050913">
    <property type="entry name" value="AP2/ERF_ERF_subfamily"/>
</dbReference>
<dbReference type="InterPro" id="IPR016177">
    <property type="entry name" value="DNA-bd_dom_sf"/>
</dbReference>
<dbReference type="PANTHER" id="PTHR31194:SF192">
    <property type="entry name" value="OS02G0797100 PROTEIN"/>
    <property type="match status" value="1"/>
</dbReference>
<dbReference type="PANTHER" id="PTHR31194">
    <property type="entry name" value="SHN SHINE , DNA BINDING / TRANSCRIPTION FACTOR"/>
    <property type="match status" value="1"/>
</dbReference>
<dbReference type="Pfam" id="PF00847">
    <property type="entry name" value="AP2"/>
    <property type="match status" value="1"/>
</dbReference>
<dbReference type="PRINTS" id="PR00367">
    <property type="entry name" value="ETHRSPELEMNT"/>
</dbReference>
<dbReference type="SMART" id="SM00380">
    <property type="entry name" value="AP2"/>
    <property type="match status" value="1"/>
</dbReference>
<dbReference type="SUPFAM" id="SSF54171">
    <property type="entry name" value="DNA-binding domain"/>
    <property type="match status" value="1"/>
</dbReference>
<dbReference type="PROSITE" id="PS51032">
    <property type="entry name" value="AP2_ERF"/>
    <property type="match status" value="1"/>
</dbReference>
<reference key="1">
    <citation type="journal article" date="1990" name="Plant Mol. Biol.">
        <title>Molecular cloning of a lupin-specific gene from a cDNA library of suspension-cultured cells of Lupinus polyphyllus.</title>
        <authorList>
            <person name="Perrey R."/>
            <person name="Warskulat U."/>
            <person name="Wink M."/>
        </authorList>
    </citation>
    <scope>NUCLEOTIDE SEQUENCE [MRNA]</scope>
</reference>
<feature type="chain" id="PRO_0000112569" description="Protein PPLZ02">
    <location>
        <begin position="1"/>
        <end position="164"/>
    </location>
</feature>
<feature type="DNA-binding region" description="AP2/ERF" evidence="1">
    <location>
        <begin position="7"/>
        <end position="64"/>
    </location>
</feature>
<protein>
    <recommendedName>
        <fullName>Protein PPLZ02</fullName>
    </recommendedName>
</protein>
<keyword id="KW-0238">DNA-binding</keyword>
<keyword id="KW-0539">Nucleus</keyword>
<keyword id="KW-0804">Transcription</keyword>
<keyword id="KW-0805">Transcription regulation</keyword>
<comment type="function">
    <text>Essential for all lupin cells independent of the respective tissue.</text>
</comment>
<comment type="subcellular location">
    <subcellularLocation>
        <location evidence="2">Nucleus</location>
    </subcellularLocation>
</comment>
<accession>P16146</accession>
<name>PZ02_LUPPO</name>
<organism>
    <name type="scientific">Lupinus polyphyllus</name>
    <name type="common">Large-leaved lupine</name>
    <dbReference type="NCBI Taxonomy" id="3874"/>
    <lineage>
        <taxon>Eukaryota</taxon>
        <taxon>Viridiplantae</taxon>
        <taxon>Streptophyta</taxon>
        <taxon>Embryophyta</taxon>
        <taxon>Tracheophyta</taxon>
        <taxon>Spermatophyta</taxon>
        <taxon>Magnoliopsida</taxon>
        <taxon>eudicotyledons</taxon>
        <taxon>Gunneridae</taxon>
        <taxon>Pentapetalae</taxon>
        <taxon>rosids</taxon>
        <taxon>fabids</taxon>
        <taxon>Fabales</taxon>
        <taxon>Fabaceae</taxon>
        <taxon>Papilionoideae</taxon>
        <taxon>50 kb inversion clade</taxon>
        <taxon>genistoids sensu lato</taxon>
        <taxon>core genistoids</taxon>
        <taxon>Genisteae</taxon>
        <taxon>Lupinus</taxon>
    </lineage>
</organism>
<gene>
    <name type="primary">PPLZ02</name>
</gene>
<proteinExistence type="evidence at transcript level"/>
<evidence type="ECO:0000255" key="1">
    <source>
        <dbReference type="PROSITE-ProRule" id="PRU00366"/>
    </source>
</evidence>
<evidence type="ECO:0000305" key="2"/>
<sequence>MARPQQRYRGFRQRHWGSWVSEIRHSILKTRIWQGTFESAEDAARAYDEAARLMCGTRARTNFPYNPNASQSSSSKLLSATLIAKLHRCYMASLQMTRPSSLPEAPRIIASPNNAVKGIGADAMLLPKKREQEEQETGGNLDFKKVKVECSQQFKPLEEDHIAQ</sequence>